<protein>
    <recommendedName>
        <fullName evidence="1">Probable phosphoglycerate mutase GpmB</fullName>
        <ecNumber evidence="1">5.4.2.-</ecNumber>
    </recommendedName>
    <alternativeName>
        <fullName evidence="1">PGAM</fullName>
    </alternativeName>
    <alternativeName>
        <fullName evidence="1">Phosphoglyceromutase</fullName>
    </alternativeName>
</protein>
<name>GPMB_ENT38</name>
<feature type="chain" id="PRO_1000064125" description="Probable phosphoglycerate mutase GpmB">
    <location>
        <begin position="1"/>
        <end position="215"/>
    </location>
</feature>
<feature type="active site" description="Tele-phosphohistidine intermediate" evidence="1">
    <location>
        <position position="9"/>
    </location>
</feature>
<feature type="active site" description="Proton donor/acceptor" evidence="1">
    <location>
        <position position="82"/>
    </location>
</feature>
<feature type="binding site" evidence="1">
    <location>
        <begin position="8"/>
        <end position="15"/>
    </location>
    <ligand>
        <name>substrate</name>
    </ligand>
</feature>
<feature type="binding site" evidence="1">
    <location>
        <begin position="21"/>
        <end position="22"/>
    </location>
    <ligand>
        <name>substrate</name>
    </ligand>
</feature>
<feature type="binding site" evidence="1">
    <location>
        <position position="58"/>
    </location>
    <ligand>
        <name>substrate</name>
    </ligand>
</feature>
<feature type="binding site" evidence="1">
    <location>
        <begin position="82"/>
        <end position="85"/>
    </location>
    <ligand>
        <name>substrate</name>
    </ligand>
</feature>
<feature type="binding site" evidence="1">
    <location>
        <begin position="104"/>
        <end position="105"/>
    </location>
    <ligand>
        <name>substrate</name>
    </ligand>
</feature>
<feature type="binding site" evidence="1">
    <location>
        <begin position="151"/>
        <end position="152"/>
    </location>
    <ligand>
        <name>substrate</name>
    </ligand>
</feature>
<feature type="site" description="Transition state stabilizer" evidence="1">
    <location>
        <position position="150"/>
    </location>
</feature>
<gene>
    <name evidence="1" type="primary">gpmB</name>
    <name type="ordered locus">Ent638_0556</name>
</gene>
<organism>
    <name type="scientific">Enterobacter sp. (strain 638)</name>
    <dbReference type="NCBI Taxonomy" id="399742"/>
    <lineage>
        <taxon>Bacteria</taxon>
        <taxon>Pseudomonadati</taxon>
        <taxon>Pseudomonadota</taxon>
        <taxon>Gammaproteobacteria</taxon>
        <taxon>Enterobacterales</taxon>
        <taxon>Enterobacteriaceae</taxon>
        <taxon>Enterobacter</taxon>
    </lineage>
</organism>
<reference key="1">
    <citation type="journal article" date="2010" name="PLoS Genet.">
        <title>Genome sequence of the plant growth promoting endophytic bacterium Enterobacter sp. 638.</title>
        <authorList>
            <person name="Taghavi S."/>
            <person name="van der Lelie D."/>
            <person name="Hoffman A."/>
            <person name="Zhang Y.B."/>
            <person name="Walla M.D."/>
            <person name="Vangronsveld J."/>
            <person name="Newman L."/>
            <person name="Monchy S."/>
        </authorList>
    </citation>
    <scope>NUCLEOTIDE SEQUENCE [LARGE SCALE GENOMIC DNA]</scope>
    <source>
        <strain>638</strain>
    </source>
</reference>
<dbReference type="EC" id="5.4.2.-" evidence="1"/>
<dbReference type="EMBL" id="CP000653">
    <property type="protein sequence ID" value="ABP59243.1"/>
    <property type="molecule type" value="Genomic_DNA"/>
</dbReference>
<dbReference type="RefSeq" id="WP_012015966.1">
    <property type="nucleotide sequence ID" value="NC_009436.1"/>
</dbReference>
<dbReference type="SMR" id="A4W6B3"/>
<dbReference type="STRING" id="399742.Ent638_0556"/>
<dbReference type="GeneID" id="93307728"/>
<dbReference type="KEGG" id="ent:Ent638_0556"/>
<dbReference type="eggNOG" id="COG0406">
    <property type="taxonomic scope" value="Bacteria"/>
</dbReference>
<dbReference type="HOGENOM" id="CLU_033323_9_5_6"/>
<dbReference type="OrthoDB" id="9783269at2"/>
<dbReference type="UniPathway" id="UPA00109">
    <property type="reaction ID" value="UER00186"/>
</dbReference>
<dbReference type="Proteomes" id="UP000000230">
    <property type="component" value="Chromosome"/>
</dbReference>
<dbReference type="GO" id="GO:0005737">
    <property type="term" value="C:cytoplasm"/>
    <property type="evidence" value="ECO:0007669"/>
    <property type="project" value="TreeGrafter"/>
</dbReference>
<dbReference type="GO" id="GO:0016791">
    <property type="term" value="F:phosphatase activity"/>
    <property type="evidence" value="ECO:0007669"/>
    <property type="project" value="TreeGrafter"/>
</dbReference>
<dbReference type="GO" id="GO:0004619">
    <property type="term" value="F:phosphoglycerate mutase activity"/>
    <property type="evidence" value="ECO:0007669"/>
    <property type="project" value="UniProtKB-UniRule"/>
</dbReference>
<dbReference type="GO" id="GO:0006096">
    <property type="term" value="P:glycolytic process"/>
    <property type="evidence" value="ECO:0007669"/>
    <property type="project" value="UniProtKB-UniRule"/>
</dbReference>
<dbReference type="CDD" id="cd07067">
    <property type="entry name" value="HP_PGM_like"/>
    <property type="match status" value="1"/>
</dbReference>
<dbReference type="Gene3D" id="3.40.50.1240">
    <property type="entry name" value="Phosphoglycerate mutase-like"/>
    <property type="match status" value="1"/>
</dbReference>
<dbReference type="HAMAP" id="MF_01040">
    <property type="entry name" value="PGAM_GpmB"/>
    <property type="match status" value="1"/>
</dbReference>
<dbReference type="InterPro" id="IPR013078">
    <property type="entry name" value="His_Pase_superF_clade-1"/>
</dbReference>
<dbReference type="InterPro" id="IPR029033">
    <property type="entry name" value="His_PPase_superfam"/>
</dbReference>
<dbReference type="InterPro" id="IPR001345">
    <property type="entry name" value="PG/BPGM_mutase_AS"/>
</dbReference>
<dbReference type="InterPro" id="IPR050275">
    <property type="entry name" value="PGM_Phosphatase"/>
</dbReference>
<dbReference type="InterPro" id="IPR023086">
    <property type="entry name" value="Phosphoglycerate_mutase_GpmB"/>
</dbReference>
<dbReference type="NCBIfam" id="NF002901">
    <property type="entry name" value="PRK03482.1"/>
    <property type="match status" value="1"/>
</dbReference>
<dbReference type="PANTHER" id="PTHR48100">
    <property type="entry name" value="BROAD-SPECIFICITY PHOSPHATASE YOR283W-RELATED"/>
    <property type="match status" value="1"/>
</dbReference>
<dbReference type="PANTHER" id="PTHR48100:SF1">
    <property type="entry name" value="HISTIDINE PHOSPHATASE FAMILY PROTEIN-RELATED"/>
    <property type="match status" value="1"/>
</dbReference>
<dbReference type="Pfam" id="PF00300">
    <property type="entry name" value="His_Phos_1"/>
    <property type="match status" value="1"/>
</dbReference>
<dbReference type="SMART" id="SM00855">
    <property type="entry name" value="PGAM"/>
    <property type="match status" value="1"/>
</dbReference>
<dbReference type="SUPFAM" id="SSF53254">
    <property type="entry name" value="Phosphoglycerate mutase-like"/>
    <property type="match status" value="1"/>
</dbReference>
<dbReference type="PROSITE" id="PS00175">
    <property type="entry name" value="PG_MUTASE"/>
    <property type="match status" value="1"/>
</dbReference>
<proteinExistence type="inferred from homology"/>
<sequence length="215" mass="23885">MLQVYLVRHGETQWNAERRIQGQSDSPLTAKGEQQARQVAERARTLGITHIIASDLGRTQQTARIIADACGCDIILDPRLRELDMGVLEKRHVDSLTDEEEGWRRTLVNGTEDGRIPDGESMQELSVRVQAALADCLKLPEGSRPLLVSHGIALGCLVSTILGLPAYAERRLRLRNCSISRIDYQESPWLASGWVVEMAGDISHLDAPALDELQR</sequence>
<accession>A4W6B3</accession>
<evidence type="ECO:0000255" key="1">
    <source>
        <dbReference type="HAMAP-Rule" id="MF_01040"/>
    </source>
</evidence>
<keyword id="KW-0324">Glycolysis</keyword>
<keyword id="KW-0413">Isomerase</keyword>
<comment type="catalytic activity">
    <reaction evidence="1">
        <text>(2R)-2-phosphoglycerate = (2R)-3-phosphoglycerate</text>
        <dbReference type="Rhea" id="RHEA:15901"/>
        <dbReference type="ChEBI" id="CHEBI:58272"/>
        <dbReference type="ChEBI" id="CHEBI:58289"/>
    </reaction>
</comment>
<comment type="pathway">
    <text evidence="1">Carbohydrate degradation; glycolysis; pyruvate from D-glyceraldehyde 3-phosphate: step 3/5.</text>
</comment>
<comment type="similarity">
    <text evidence="1">Belongs to the phosphoglycerate mutase family. GpmB subfamily.</text>
</comment>